<dbReference type="EMBL" id="CP000133">
    <property type="protein sequence ID" value="ABC89142.1"/>
    <property type="status" value="ALT_INIT"/>
    <property type="molecule type" value="Genomic_DNA"/>
</dbReference>
<dbReference type="RefSeq" id="WP_042117767.1">
    <property type="nucleotide sequence ID" value="NC_007761.1"/>
</dbReference>
<dbReference type="SMR" id="Q2KDE4"/>
<dbReference type="KEGG" id="ret:RHE_CH00320"/>
<dbReference type="eggNOG" id="COG0792">
    <property type="taxonomic scope" value="Bacteria"/>
</dbReference>
<dbReference type="HOGENOM" id="CLU_115353_0_2_5"/>
<dbReference type="OrthoDB" id="9812968at2"/>
<dbReference type="Proteomes" id="UP000001936">
    <property type="component" value="Chromosome"/>
</dbReference>
<dbReference type="GO" id="GO:0003676">
    <property type="term" value="F:nucleic acid binding"/>
    <property type="evidence" value="ECO:0007669"/>
    <property type="project" value="InterPro"/>
</dbReference>
<dbReference type="Gene3D" id="3.40.1350.10">
    <property type="match status" value="1"/>
</dbReference>
<dbReference type="HAMAP" id="MF_00048">
    <property type="entry name" value="UPF0102"/>
    <property type="match status" value="1"/>
</dbReference>
<dbReference type="InterPro" id="IPR011335">
    <property type="entry name" value="Restrct_endonuc-II-like"/>
</dbReference>
<dbReference type="InterPro" id="IPR011856">
    <property type="entry name" value="tRNA_endonuc-like_dom_sf"/>
</dbReference>
<dbReference type="InterPro" id="IPR003509">
    <property type="entry name" value="UPF0102_YraN-like"/>
</dbReference>
<dbReference type="NCBIfam" id="NF009151">
    <property type="entry name" value="PRK12497.1-5"/>
    <property type="match status" value="1"/>
</dbReference>
<dbReference type="PANTHER" id="PTHR34039">
    <property type="entry name" value="UPF0102 PROTEIN YRAN"/>
    <property type="match status" value="1"/>
</dbReference>
<dbReference type="PANTHER" id="PTHR34039:SF1">
    <property type="entry name" value="UPF0102 PROTEIN YRAN"/>
    <property type="match status" value="1"/>
</dbReference>
<dbReference type="Pfam" id="PF02021">
    <property type="entry name" value="UPF0102"/>
    <property type="match status" value="1"/>
</dbReference>
<dbReference type="SUPFAM" id="SSF52980">
    <property type="entry name" value="Restriction endonuclease-like"/>
    <property type="match status" value="1"/>
</dbReference>
<name>Y320_RHIEC</name>
<comment type="similarity">
    <text evidence="1">Belongs to the UPF0102 family.</text>
</comment>
<comment type="sequence caution" evidence="2">
    <conflict type="erroneous initiation">
        <sequence resource="EMBL-CDS" id="ABC89142"/>
    </conflict>
</comment>
<proteinExistence type="inferred from homology"/>
<sequence>MGNKDLTVIKRKALRRGRMSEYVAAAFLMLKGYRILALRHRTRLGEIDIVARKGDLTIFVEVKARHGEAAAIDAVSVAAQKRIRAASDLWLARQADQARLSQRYDIIAVMPGRLPRHFPDAF</sequence>
<gene>
    <name type="ordered locus">RHE_CH00320</name>
</gene>
<keyword id="KW-1185">Reference proteome</keyword>
<organism>
    <name type="scientific">Rhizobium etli (strain ATCC 51251 / DSM 11541 / JCM 21823 / NBRC 15573 / CFN 42)</name>
    <dbReference type="NCBI Taxonomy" id="347834"/>
    <lineage>
        <taxon>Bacteria</taxon>
        <taxon>Pseudomonadati</taxon>
        <taxon>Pseudomonadota</taxon>
        <taxon>Alphaproteobacteria</taxon>
        <taxon>Hyphomicrobiales</taxon>
        <taxon>Rhizobiaceae</taxon>
        <taxon>Rhizobium/Agrobacterium group</taxon>
        <taxon>Rhizobium</taxon>
    </lineage>
</organism>
<reference key="1">
    <citation type="journal article" date="2006" name="Proc. Natl. Acad. Sci. U.S.A.">
        <title>The partitioned Rhizobium etli genome: genetic and metabolic redundancy in seven interacting replicons.</title>
        <authorList>
            <person name="Gonzalez V."/>
            <person name="Santamaria R.I."/>
            <person name="Bustos P."/>
            <person name="Hernandez-Gonzalez I."/>
            <person name="Medrano-Soto A."/>
            <person name="Moreno-Hagelsieb G."/>
            <person name="Janga S.C."/>
            <person name="Ramirez M.A."/>
            <person name="Jimenez-Jacinto V."/>
            <person name="Collado-Vides J."/>
            <person name="Davila G."/>
        </authorList>
    </citation>
    <scope>NUCLEOTIDE SEQUENCE [LARGE SCALE GENOMIC DNA]</scope>
    <source>
        <strain>ATCC 51251 / DSM 11541 / JCM 21823 / NBRC 15573 / CFN 42</strain>
    </source>
</reference>
<evidence type="ECO:0000255" key="1">
    <source>
        <dbReference type="HAMAP-Rule" id="MF_00048"/>
    </source>
</evidence>
<evidence type="ECO:0000305" key="2"/>
<accession>Q2KDE4</accession>
<protein>
    <recommendedName>
        <fullName evidence="1">UPF0102 protein RHE_CH00320</fullName>
    </recommendedName>
</protein>
<feature type="chain" id="PRO_0000336244" description="UPF0102 protein RHE_CH00320">
    <location>
        <begin position="1"/>
        <end position="122"/>
    </location>
</feature>